<keyword id="KW-1185">Reference proteome</keyword>
<keyword id="KW-0687">Ribonucleoprotein</keyword>
<keyword id="KW-0689">Ribosomal protein</keyword>
<reference key="1">
    <citation type="journal article" date="2004" name="Proc. Natl. Acad. Sci. U.S.A.">
        <title>Genome sequence of the enterobacterial phytopathogen Erwinia carotovora subsp. atroseptica and characterization of virulence factors.</title>
        <authorList>
            <person name="Bell K.S."/>
            <person name="Sebaihia M."/>
            <person name="Pritchard L."/>
            <person name="Holden M.T.G."/>
            <person name="Hyman L.J."/>
            <person name="Holeva M.C."/>
            <person name="Thomson N.R."/>
            <person name="Bentley S.D."/>
            <person name="Churcher L.J.C."/>
            <person name="Mungall K."/>
            <person name="Atkin R."/>
            <person name="Bason N."/>
            <person name="Brooks K."/>
            <person name="Chillingworth T."/>
            <person name="Clark K."/>
            <person name="Doggett J."/>
            <person name="Fraser A."/>
            <person name="Hance Z."/>
            <person name="Hauser H."/>
            <person name="Jagels K."/>
            <person name="Moule S."/>
            <person name="Norbertczak H."/>
            <person name="Ormond D."/>
            <person name="Price C."/>
            <person name="Quail M.A."/>
            <person name="Sanders M."/>
            <person name="Walker D."/>
            <person name="Whitehead S."/>
            <person name="Salmond G.P.C."/>
            <person name="Birch P.R.J."/>
            <person name="Parkhill J."/>
            <person name="Toth I.K."/>
        </authorList>
    </citation>
    <scope>NUCLEOTIDE SEQUENCE [LARGE SCALE GENOMIC DNA]</scope>
    <source>
        <strain>SCRI 1043 / ATCC BAA-672</strain>
    </source>
</reference>
<name>RL32_PECAS</name>
<feature type="chain" id="PRO_0000225724" description="Large ribosomal subunit protein bL32">
    <location>
        <begin position="1"/>
        <end position="56"/>
    </location>
</feature>
<feature type="region of interest" description="Disordered" evidence="2">
    <location>
        <begin position="1"/>
        <end position="29"/>
    </location>
</feature>
<organism>
    <name type="scientific">Pectobacterium atrosepticum (strain SCRI 1043 / ATCC BAA-672)</name>
    <name type="common">Erwinia carotovora subsp. atroseptica</name>
    <dbReference type="NCBI Taxonomy" id="218491"/>
    <lineage>
        <taxon>Bacteria</taxon>
        <taxon>Pseudomonadati</taxon>
        <taxon>Pseudomonadota</taxon>
        <taxon>Gammaproteobacteria</taxon>
        <taxon>Enterobacterales</taxon>
        <taxon>Pectobacteriaceae</taxon>
        <taxon>Pectobacterium</taxon>
    </lineage>
</organism>
<dbReference type="EMBL" id="BX950851">
    <property type="protein sequence ID" value="CAG74698.1"/>
    <property type="molecule type" value="Genomic_DNA"/>
</dbReference>
<dbReference type="RefSeq" id="WP_011093369.1">
    <property type="nucleotide sequence ID" value="NC_004547.2"/>
</dbReference>
<dbReference type="SMR" id="Q6D692"/>
<dbReference type="STRING" id="218491.ECA1793"/>
<dbReference type="GeneID" id="90763872"/>
<dbReference type="KEGG" id="eca:ECA1793"/>
<dbReference type="eggNOG" id="COG0333">
    <property type="taxonomic scope" value="Bacteria"/>
</dbReference>
<dbReference type="HOGENOM" id="CLU_129084_2_1_6"/>
<dbReference type="OrthoDB" id="9801927at2"/>
<dbReference type="Proteomes" id="UP000007966">
    <property type="component" value="Chromosome"/>
</dbReference>
<dbReference type="GO" id="GO:0015934">
    <property type="term" value="C:large ribosomal subunit"/>
    <property type="evidence" value="ECO:0007669"/>
    <property type="project" value="InterPro"/>
</dbReference>
<dbReference type="GO" id="GO:0003735">
    <property type="term" value="F:structural constituent of ribosome"/>
    <property type="evidence" value="ECO:0007669"/>
    <property type="project" value="InterPro"/>
</dbReference>
<dbReference type="GO" id="GO:0006412">
    <property type="term" value="P:translation"/>
    <property type="evidence" value="ECO:0007669"/>
    <property type="project" value="UniProtKB-UniRule"/>
</dbReference>
<dbReference type="HAMAP" id="MF_00340">
    <property type="entry name" value="Ribosomal_bL32"/>
    <property type="match status" value="1"/>
</dbReference>
<dbReference type="InterPro" id="IPR002677">
    <property type="entry name" value="Ribosomal_bL32"/>
</dbReference>
<dbReference type="InterPro" id="IPR044957">
    <property type="entry name" value="Ribosomal_bL32_bact"/>
</dbReference>
<dbReference type="InterPro" id="IPR011332">
    <property type="entry name" value="Ribosomal_zn-bd"/>
</dbReference>
<dbReference type="NCBIfam" id="TIGR01031">
    <property type="entry name" value="rpmF_bact"/>
    <property type="match status" value="1"/>
</dbReference>
<dbReference type="PANTHER" id="PTHR35534">
    <property type="entry name" value="50S RIBOSOMAL PROTEIN L32"/>
    <property type="match status" value="1"/>
</dbReference>
<dbReference type="PANTHER" id="PTHR35534:SF1">
    <property type="entry name" value="LARGE RIBOSOMAL SUBUNIT PROTEIN BL32"/>
    <property type="match status" value="1"/>
</dbReference>
<dbReference type="Pfam" id="PF01783">
    <property type="entry name" value="Ribosomal_L32p"/>
    <property type="match status" value="1"/>
</dbReference>
<dbReference type="SUPFAM" id="SSF57829">
    <property type="entry name" value="Zn-binding ribosomal proteins"/>
    <property type="match status" value="1"/>
</dbReference>
<accession>Q6D692</accession>
<evidence type="ECO:0000255" key="1">
    <source>
        <dbReference type="HAMAP-Rule" id="MF_00340"/>
    </source>
</evidence>
<evidence type="ECO:0000256" key="2">
    <source>
        <dbReference type="SAM" id="MobiDB-lite"/>
    </source>
</evidence>
<evidence type="ECO:0000305" key="3"/>
<sequence>MAVQQNKPSRSKRGMRRSHDALTTSSVSVDKVSGETHLRHHITADGYYRGRKVIAK</sequence>
<proteinExistence type="inferred from homology"/>
<gene>
    <name evidence="1" type="primary">rpmF</name>
    <name type="ordered locus">ECA1793</name>
</gene>
<protein>
    <recommendedName>
        <fullName evidence="1">Large ribosomal subunit protein bL32</fullName>
    </recommendedName>
    <alternativeName>
        <fullName evidence="3">50S ribosomal protein L32</fullName>
    </alternativeName>
</protein>
<comment type="similarity">
    <text evidence="1">Belongs to the bacterial ribosomal protein bL32 family.</text>
</comment>